<reference key="1">
    <citation type="journal article" date="2002" name="Nature">
        <title>Comparison of the genomes of two Xanthomonas pathogens with differing host specificities.</title>
        <authorList>
            <person name="da Silva A.C.R."/>
            <person name="Ferro J.A."/>
            <person name="Reinach F.C."/>
            <person name="Farah C.S."/>
            <person name="Furlan L.R."/>
            <person name="Quaggio R.B."/>
            <person name="Monteiro-Vitorello C.B."/>
            <person name="Van Sluys M.A."/>
            <person name="Almeida N.F. Jr."/>
            <person name="Alves L.M.C."/>
            <person name="do Amaral A.M."/>
            <person name="Bertolini M.C."/>
            <person name="Camargo L.E.A."/>
            <person name="Camarotte G."/>
            <person name="Cannavan F."/>
            <person name="Cardozo J."/>
            <person name="Chambergo F."/>
            <person name="Ciapina L.P."/>
            <person name="Cicarelli R.M.B."/>
            <person name="Coutinho L.L."/>
            <person name="Cursino-Santos J.R."/>
            <person name="El-Dorry H."/>
            <person name="Faria J.B."/>
            <person name="Ferreira A.J.S."/>
            <person name="Ferreira R.C.C."/>
            <person name="Ferro M.I.T."/>
            <person name="Formighieri E.F."/>
            <person name="Franco M.C."/>
            <person name="Greggio C.C."/>
            <person name="Gruber A."/>
            <person name="Katsuyama A.M."/>
            <person name="Kishi L.T."/>
            <person name="Leite R.P."/>
            <person name="Lemos E.G.M."/>
            <person name="Lemos M.V.F."/>
            <person name="Locali E.C."/>
            <person name="Machado M.A."/>
            <person name="Madeira A.M.B.N."/>
            <person name="Martinez-Rossi N.M."/>
            <person name="Martins E.C."/>
            <person name="Meidanis J."/>
            <person name="Menck C.F.M."/>
            <person name="Miyaki C.Y."/>
            <person name="Moon D.H."/>
            <person name="Moreira L.M."/>
            <person name="Novo M.T.M."/>
            <person name="Okura V.K."/>
            <person name="Oliveira M.C."/>
            <person name="Oliveira V.R."/>
            <person name="Pereira H.A."/>
            <person name="Rossi A."/>
            <person name="Sena J.A.D."/>
            <person name="Silva C."/>
            <person name="de Souza R.F."/>
            <person name="Spinola L.A.F."/>
            <person name="Takita M.A."/>
            <person name="Tamura R.E."/>
            <person name="Teixeira E.C."/>
            <person name="Tezza R.I.D."/>
            <person name="Trindade dos Santos M."/>
            <person name="Truffi D."/>
            <person name="Tsai S.M."/>
            <person name="White F.F."/>
            <person name="Setubal J.C."/>
            <person name="Kitajima J.P."/>
        </authorList>
    </citation>
    <scope>NUCLEOTIDE SEQUENCE [LARGE SCALE GENOMIC DNA]</scope>
    <source>
        <strain>306</strain>
    </source>
</reference>
<protein>
    <recommendedName>
        <fullName evidence="1">Small ribosomal subunit protein uS15</fullName>
    </recommendedName>
    <alternativeName>
        <fullName evidence="3">30S ribosomal protein S15</fullName>
    </alternativeName>
</protein>
<name>RS15_XANAC</name>
<feature type="chain" id="PRO_0000115590" description="Small ribosomal subunit protein uS15">
    <location>
        <begin position="1"/>
        <end position="86"/>
    </location>
</feature>
<feature type="region of interest" description="Disordered" evidence="2">
    <location>
        <begin position="1"/>
        <end position="22"/>
    </location>
</feature>
<feature type="compositionally biased region" description="Basic and acidic residues" evidence="2">
    <location>
        <begin position="7"/>
        <end position="16"/>
    </location>
</feature>
<proteinExistence type="inferred from homology"/>
<dbReference type="EMBL" id="AE008923">
    <property type="protein sequence ID" value="AAM37531.1"/>
    <property type="molecule type" value="Genomic_DNA"/>
</dbReference>
<dbReference type="RefSeq" id="WP_003485583.1">
    <property type="nucleotide sequence ID" value="NC_003919.1"/>
</dbReference>
<dbReference type="SMR" id="Q8PJ58"/>
<dbReference type="GeneID" id="97510971"/>
<dbReference type="KEGG" id="xac:XAC2684"/>
<dbReference type="eggNOG" id="COG0184">
    <property type="taxonomic scope" value="Bacteria"/>
</dbReference>
<dbReference type="HOGENOM" id="CLU_148518_1_0_6"/>
<dbReference type="Proteomes" id="UP000000576">
    <property type="component" value="Chromosome"/>
</dbReference>
<dbReference type="GO" id="GO:0022627">
    <property type="term" value="C:cytosolic small ribosomal subunit"/>
    <property type="evidence" value="ECO:0007669"/>
    <property type="project" value="TreeGrafter"/>
</dbReference>
<dbReference type="GO" id="GO:0019843">
    <property type="term" value="F:rRNA binding"/>
    <property type="evidence" value="ECO:0007669"/>
    <property type="project" value="UniProtKB-UniRule"/>
</dbReference>
<dbReference type="GO" id="GO:0003735">
    <property type="term" value="F:structural constituent of ribosome"/>
    <property type="evidence" value="ECO:0007669"/>
    <property type="project" value="InterPro"/>
</dbReference>
<dbReference type="GO" id="GO:0006412">
    <property type="term" value="P:translation"/>
    <property type="evidence" value="ECO:0007669"/>
    <property type="project" value="UniProtKB-UniRule"/>
</dbReference>
<dbReference type="CDD" id="cd00353">
    <property type="entry name" value="Ribosomal_S15p_S13e"/>
    <property type="match status" value="1"/>
</dbReference>
<dbReference type="FunFam" id="1.10.287.10:FF:000002">
    <property type="entry name" value="30S ribosomal protein S15"/>
    <property type="match status" value="1"/>
</dbReference>
<dbReference type="Gene3D" id="6.10.250.3130">
    <property type="match status" value="1"/>
</dbReference>
<dbReference type="Gene3D" id="1.10.287.10">
    <property type="entry name" value="S15/NS1, RNA-binding"/>
    <property type="match status" value="1"/>
</dbReference>
<dbReference type="HAMAP" id="MF_01343_B">
    <property type="entry name" value="Ribosomal_uS15_B"/>
    <property type="match status" value="1"/>
</dbReference>
<dbReference type="InterPro" id="IPR000589">
    <property type="entry name" value="Ribosomal_uS15"/>
</dbReference>
<dbReference type="InterPro" id="IPR005290">
    <property type="entry name" value="Ribosomal_uS15_bac-type"/>
</dbReference>
<dbReference type="InterPro" id="IPR009068">
    <property type="entry name" value="uS15_NS1_RNA-bd_sf"/>
</dbReference>
<dbReference type="NCBIfam" id="TIGR00952">
    <property type="entry name" value="S15_bact"/>
    <property type="match status" value="1"/>
</dbReference>
<dbReference type="PANTHER" id="PTHR23321">
    <property type="entry name" value="RIBOSOMAL PROTEIN S15, BACTERIAL AND ORGANELLAR"/>
    <property type="match status" value="1"/>
</dbReference>
<dbReference type="PANTHER" id="PTHR23321:SF26">
    <property type="entry name" value="SMALL RIBOSOMAL SUBUNIT PROTEIN US15M"/>
    <property type="match status" value="1"/>
</dbReference>
<dbReference type="Pfam" id="PF00312">
    <property type="entry name" value="Ribosomal_S15"/>
    <property type="match status" value="1"/>
</dbReference>
<dbReference type="SMART" id="SM01387">
    <property type="entry name" value="Ribosomal_S15"/>
    <property type="match status" value="1"/>
</dbReference>
<dbReference type="SUPFAM" id="SSF47060">
    <property type="entry name" value="S15/NS1 RNA-binding domain"/>
    <property type="match status" value="1"/>
</dbReference>
<dbReference type="PROSITE" id="PS00362">
    <property type="entry name" value="RIBOSOMAL_S15"/>
    <property type="match status" value="1"/>
</dbReference>
<comment type="function">
    <text evidence="1">One of the primary rRNA binding proteins, it binds directly to 16S rRNA where it helps nucleate assembly of the platform of the 30S subunit by binding and bridging several RNA helices of the 16S rRNA.</text>
</comment>
<comment type="function">
    <text evidence="1">Forms an intersubunit bridge (bridge B4) with the 23S rRNA of the 50S subunit in the ribosome.</text>
</comment>
<comment type="subunit">
    <text evidence="1">Part of the 30S ribosomal subunit. Forms a bridge to the 50S subunit in the 70S ribosome, contacting the 23S rRNA.</text>
</comment>
<comment type="similarity">
    <text evidence="1">Belongs to the universal ribosomal protein uS15 family.</text>
</comment>
<evidence type="ECO:0000255" key="1">
    <source>
        <dbReference type="HAMAP-Rule" id="MF_01343"/>
    </source>
</evidence>
<evidence type="ECO:0000256" key="2">
    <source>
        <dbReference type="SAM" id="MobiDB-lite"/>
    </source>
</evidence>
<evidence type="ECO:0000305" key="3"/>
<organism>
    <name type="scientific">Xanthomonas axonopodis pv. citri (strain 306)</name>
    <dbReference type="NCBI Taxonomy" id="190486"/>
    <lineage>
        <taxon>Bacteria</taxon>
        <taxon>Pseudomonadati</taxon>
        <taxon>Pseudomonadota</taxon>
        <taxon>Gammaproteobacteria</taxon>
        <taxon>Lysobacterales</taxon>
        <taxon>Lysobacteraceae</taxon>
        <taxon>Xanthomonas</taxon>
    </lineage>
</organism>
<sequence>MSVDTQKVIEDNKRSAQDTGSPEVQVALLTARIELLTGHFKTHKKDHHSRRGLLQMVNRRRSLLDYLKKKDNERYKSLIEKLGLRR</sequence>
<accession>Q8PJ58</accession>
<gene>
    <name evidence="1" type="primary">rpsO</name>
    <name type="ordered locus">XAC2684</name>
</gene>
<keyword id="KW-0687">Ribonucleoprotein</keyword>
<keyword id="KW-0689">Ribosomal protein</keyword>
<keyword id="KW-0694">RNA-binding</keyword>
<keyword id="KW-0699">rRNA-binding</keyword>